<sequence>MRYYGSYYRGLGYGCGGFGGLGYGCGCGGYRYGSGYGGYRYGCCRPSCREGYGFSGFY</sequence>
<organism>
    <name type="scientific">Homo sapiens</name>
    <name type="common">Human</name>
    <dbReference type="NCBI Taxonomy" id="9606"/>
    <lineage>
        <taxon>Eukaryota</taxon>
        <taxon>Metazoa</taxon>
        <taxon>Chordata</taxon>
        <taxon>Craniata</taxon>
        <taxon>Vertebrata</taxon>
        <taxon>Euteleostomi</taxon>
        <taxon>Mammalia</taxon>
        <taxon>Eutheria</taxon>
        <taxon>Euarchontoglires</taxon>
        <taxon>Primates</taxon>
        <taxon>Haplorrhini</taxon>
        <taxon>Catarrhini</taxon>
        <taxon>Hominidae</taxon>
        <taxon>Homo</taxon>
    </lineage>
</organism>
<dbReference type="EMBL" id="AB096947">
    <property type="protein sequence ID" value="BAE46362.1"/>
    <property type="molecule type" value="mRNA"/>
</dbReference>
<dbReference type="EMBL" id="AB096948">
    <property type="protein sequence ID" value="BAE46363.1"/>
    <property type="status" value="ALT_FRAME"/>
    <property type="molecule type" value="mRNA"/>
</dbReference>
<dbReference type="EMBL" id="AP000567">
    <property type="status" value="NOT_ANNOTATED_CDS"/>
    <property type="molecule type" value="Genomic_DNA"/>
</dbReference>
<dbReference type="CCDS" id="CCDS13598.1"/>
<dbReference type="RefSeq" id="NP_001290049.1">
    <property type="nucleotide sequence ID" value="NM_001303120.1"/>
</dbReference>
<dbReference type="RefSeq" id="NP_853643.1">
    <property type="nucleotide sequence ID" value="NM_181612.3"/>
</dbReference>
<dbReference type="BioGRID" id="130656">
    <property type="interactions" value="86"/>
</dbReference>
<dbReference type="FunCoup" id="Q3LI70">
    <property type="interactions" value="7"/>
</dbReference>
<dbReference type="IntAct" id="Q3LI70">
    <property type="interactions" value="74"/>
</dbReference>
<dbReference type="STRING" id="9606.ENSP00000375107"/>
<dbReference type="BioMuta" id="KRTAP19-6"/>
<dbReference type="DMDM" id="215274009"/>
<dbReference type="PaxDb" id="9606-ENSP00000375107"/>
<dbReference type="TopDownProteomics" id="Q3LI70"/>
<dbReference type="DNASU" id="337973"/>
<dbReference type="Ensembl" id="ENST00000334046.5">
    <property type="protein sequence ID" value="ENSP00000375107.3"/>
    <property type="gene ID" value="ENSG00000186925.6"/>
</dbReference>
<dbReference type="GeneID" id="337973"/>
<dbReference type="KEGG" id="hsa:337973"/>
<dbReference type="MANE-Select" id="ENST00000334046.5">
    <property type="protein sequence ID" value="ENSP00000375107.3"/>
    <property type="RefSeq nucleotide sequence ID" value="NM_181612.3"/>
    <property type="RefSeq protein sequence ID" value="NP_853643.1"/>
</dbReference>
<dbReference type="UCSC" id="uc002yok.2">
    <property type="organism name" value="human"/>
</dbReference>
<dbReference type="AGR" id="HGNC:18941"/>
<dbReference type="CTD" id="337973"/>
<dbReference type="GeneCards" id="KRTAP19-6"/>
<dbReference type="HGNC" id="HGNC:18941">
    <property type="gene designation" value="KRTAP19-6"/>
</dbReference>
<dbReference type="HPA" id="ENSG00000186925">
    <property type="expression patterns" value="Not detected"/>
</dbReference>
<dbReference type="neXtProt" id="NX_Q3LI70"/>
<dbReference type="PharmGKB" id="PA134901069"/>
<dbReference type="VEuPathDB" id="HostDB:ENSG00000186925"/>
<dbReference type="eggNOG" id="ENOG502TEB6">
    <property type="taxonomic scope" value="Eukaryota"/>
</dbReference>
<dbReference type="GeneTree" id="ENSGT00950000184153"/>
<dbReference type="HOGENOM" id="CLU_184630_0_0_1"/>
<dbReference type="InParanoid" id="Q3LI70"/>
<dbReference type="OMA" id="CRPSCRE"/>
<dbReference type="PAN-GO" id="Q3LI70">
    <property type="GO annotations" value="0 GO annotations based on evolutionary models"/>
</dbReference>
<dbReference type="PathwayCommons" id="Q3LI70"/>
<dbReference type="Reactome" id="R-HSA-6805567">
    <property type="pathway name" value="Keratinization"/>
</dbReference>
<dbReference type="SignaLink" id="Q3LI70"/>
<dbReference type="BioGRID-ORCS" id="337973">
    <property type="hits" value="96 hits in 1039 CRISPR screens"/>
</dbReference>
<dbReference type="GenomeRNAi" id="337973"/>
<dbReference type="Pharos" id="Q3LI70">
    <property type="development level" value="Tdark"/>
</dbReference>
<dbReference type="PRO" id="PR:Q3LI70"/>
<dbReference type="Proteomes" id="UP000005640">
    <property type="component" value="Chromosome 21"/>
</dbReference>
<dbReference type="RNAct" id="Q3LI70">
    <property type="molecule type" value="protein"/>
</dbReference>
<dbReference type="Bgee" id="ENSG00000186925">
    <property type="expression patterns" value="Expressed in male germ line stem cell (sensu Vertebrata) in testis and 15 other cell types or tissues"/>
</dbReference>
<dbReference type="GO" id="GO:0005829">
    <property type="term" value="C:cytosol"/>
    <property type="evidence" value="ECO:0000304"/>
    <property type="project" value="Reactome"/>
</dbReference>
<dbReference type="GO" id="GO:0005882">
    <property type="term" value="C:intermediate filament"/>
    <property type="evidence" value="ECO:0007669"/>
    <property type="project" value="UniProtKB-KW"/>
</dbReference>
<dbReference type="InterPro" id="IPR021743">
    <property type="entry name" value="KRTAP_type8/19/20/21/22"/>
</dbReference>
<dbReference type="InterPro" id="IPR051528">
    <property type="entry name" value="KRTAP_type_19"/>
</dbReference>
<dbReference type="PANTHER" id="PTHR38140">
    <property type="entry name" value="KERATIN-ASSOCIATED PROTEIN 19-3-RELATED"/>
    <property type="match status" value="1"/>
</dbReference>
<dbReference type="PANTHER" id="PTHR38140:SF5">
    <property type="entry name" value="KERATIN-ASSOCIATED PROTEIN 19-4-RELATED"/>
    <property type="match status" value="1"/>
</dbReference>
<dbReference type="Pfam" id="PF11759">
    <property type="entry name" value="KRTAP"/>
    <property type="match status" value="1"/>
</dbReference>
<protein>
    <recommendedName>
        <fullName>Keratin-associated protein 19-6</fullName>
    </recommendedName>
</protein>
<evidence type="ECO:0000250" key="1"/>
<evidence type="ECO:0000305" key="2"/>
<name>KR196_HUMAN</name>
<feature type="chain" id="PRO_0000223908" description="Keratin-associated protein 19-6">
    <location>
        <begin position="1"/>
        <end position="58"/>
    </location>
</feature>
<accession>Q3LI70</accession>
<accession>Q3LI71</accession>
<proteinExistence type="evidence at protein level"/>
<keyword id="KW-0416">Keratin</keyword>
<keyword id="KW-1185">Reference proteome</keyword>
<keyword id="KW-0677">Repeat</keyword>
<reference key="1">
    <citation type="submission" date="2002-11" db="EMBL/GenBank/DDBJ databases">
        <title>Identification of complete keratin-associated protein (KAP) gene cluster spanning 800 kb region on human chromosome 21q22.11.</title>
        <authorList>
            <person name="Obayashi I."/>
            <person name="Shibuya K."/>
            <person name="Minoshima S."/>
            <person name="Kudoh J."/>
            <person name="Shimizu N."/>
        </authorList>
    </citation>
    <scope>NUCLEOTIDE SEQUENCE [MRNA]</scope>
    <source>
        <tissue>Hair root</tissue>
    </source>
</reference>
<reference key="2">
    <citation type="journal article" date="2000" name="Nature">
        <title>The DNA sequence of human chromosome 21.</title>
        <authorList>
            <person name="Hattori M."/>
            <person name="Fujiyama A."/>
            <person name="Taylor T.D."/>
            <person name="Watanabe H."/>
            <person name="Yada T."/>
            <person name="Park H.-S."/>
            <person name="Toyoda A."/>
            <person name="Ishii K."/>
            <person name="Totoki Y."/>
            <person name="Choi D.-K."/>
            <person name="Groner Y."/>
            <person name="Soeda E."/>
            <person name="Ohki M."/>
            <person name="Takagi T."/>
            <person name="Sakaki Y."/>
            <person name="Taudien S."/>
            <person name="Blechschmidt K."/>
            <person name="Polley A."/>
            <person name="Menzel U."/>
            <person name="Delabar J."/>
            <person name="Kumpf K."/>
            <person name="Lehmann R."/>
            <person name="Patterson D."/>
            <person name="Reichwald K."/>
            <person name="Rump A."/>
            <person name="Schillhabel M."/>
            <person name="Schudy A."/>
            <person name="Zimmermann W."/>
            <person name="Rosenthal A."/>
            <person name="Kudoh J."/>
            <person name="Shibuya K."/>
            <person name="Kawasaki K."/>
            <person name="Asakawa S."/>
            <person name="Shintani A."/>
            <person name="Sasaki T."/>
            <person name="Nagamine K."/>
            <person name="Mitsuyama S."/>
            <person name="Antonarakis S.E."/>
            <person name="Minoshima S."/>
            <person name="Shimizu N."/>
            <person name="Nordsiek G."/>
            <person name="Hornischer K."/>
            <person name="Brandt P."/>
            <person name="Scharfe M."/>
            <person name="Schoen O."/>
            <person name="Desario A."/>
            <person name="Reichelt J."/>
            <person name="Kauer G."/>
            <person name="Bloecker H."/>
            <person name="Ramser J."/>
            <person name="Beck A."/>
            <person name="Klages S."/>
            <person name="Hennig S."/>
            <person name="Riesselmann L."/>
            <person name="Dagand E."/>
            <person name="Wehrmeyer S."/>
            <person name="Borzym K."/>
            <person name="Gardiner K."/>
            <person name="Nizetic D."/>
            <person name="Francis F."/>
            <person name="Lehrach H."/>
            <person name="Reinhardt R."/>
            <person name="Yaspo M.-L."/>
        </authorList>
    </citation>
    <scope>NUCLEOTIDE SEQUENCE [LARGE SCALE GENOMIC DNA]</scope>
</reference>
<gene>
    <name type="primary">KRTAP19-6</name>
    <name type="synonym">KAP19.6</name>
</gene>
<comment type="function">
    <text>In the hair cortex, hair keratin intermediate filaments are embedded in an interfilamentous matrix, consisting of hair keratin-associated proteins (KRTAP), which are essential for the formation of a rigid and resistant hair shaft through their extensive disulfide bond cross-linking with abundant cysteine residues of hair keratins. The matrix proteins include the high-sulfur and high-glycine-tyrosine keratins.</text>
</comment>
<comment type="subunit">
    <text evidence="1">Interacts with hair keratins.</text>
</comment>
<comment type="interaction">
    <interactant intactId="EBI-12805508">
        <id>Q3LI70</id>
    </interactant>
    <interactant intactId="EBI-745689">
        <id>Q7L5A3</id>
        <label>ATOSB</label>
    </interactant>
    <organismsDiffer>false</organismsDiffer>
    <experiments>3</experiments>
</comment>
<comment type="interaction">
    <interactant intactId="EBI-12805508">
        <id>Q3LI70</id>
    </interactant>
    <interactant intactId="EBI-1166928">
        <id>Q8N5M1</id>
        <label>ATPAF2</label>
    </interactant>
    <organismsDiffer>false</organismsDiffer>
    <experiments>3</experiments>
</comment>
<comment type="interaction">
    <interactant intactId="EBI-12805508">
        <id>Q3LI70</id>
    </interactant>
    <interactant intactId="EBI-1050106">
        <id>O75934</id>
        <label>BCAS2</label>
    </interactant>
    <organismsDiffer>false</organismsDiffer>
    <experiments>3</experiments>
</comment>
<comment type="interaction">
    <interactant intactId="EBI-12805508">
        <id>Q3LI70</id>
    </interactant>
    <interactant intactId="EBI-744545">
        <id>Q8NEC5</id>
        <label>CATSPER1</label>
    </interactant>
    <organismsDiffer>false</organismsDiffer>
    <experiments>3</experiments>
</comment>
<comment type="interaction">
    <interactant intactId="EBI-12805508">
        <id>Q3LI70</id>
    </interactant>
    <interactant intactId="EBI-1104933">
        <id>Q8N4L8</id>
        <label>CCDC24</label>
    </interactant>
    <organismsDiffer>false</organismsDiffer>
    <experiments>3</experiments>
</comment>
<comment type="interaction">
    <interactant intactId="EBI-12805508">
        <id>Q3LI70</id>
    </interactant>
    <interactant intactId="EBI-12010594">
        <id>O75909-2</id>
        <label>CCNK</label>
    </interactant>
    <organismsDiffer>false</organismsDiffer>
    <experiments>3</experiments>
</comment>
<comment type="interaction">
    <interactant intactId="EBI-12805508">
        <id>Q3LI70</id>
    </interactant>
    <interactant intactId="EBI-10274247">
        <id>Q8TCT0</id>
        <label>CERK</label>
    </interactant>
    <organismsDiffer>false</organismsDiffer>
    <experiments>3</experiments>
</comment>
<comment type="interaction">
    <interactant intactId="EBI-12805508">
        <id>Q3LI70</id>
    </interactant>
    <interactant intactId="EBI-12155483">
        <id>Q9H1P6</id>
        <label>CIMIP1</label>
    </interactant>
    <organismsDiffer>false</organismsDiffer>
    <experiments>3</experiments>
</comment>
<comment type="interaction">
    <interactant intactId="EBI-12805508">
        <id>Q3LI70</id>
    </interactant>
    <interactant intactId="EBI-10192698">
        <id>Q02930-3</id>
        <label>CREB5</label>
    </interactant>
    <organismsDiffer>false</organismsDiffer>
    <experiments>3</experiments>
</comment>
<comment type="interaction">
    <interactant intactId="EBI-12805508">
        <id>Q3LI70</id>
    </interactant>
    <interactant intactId="EBI-2212355">
        <id>Q49AN0</id>
        <label>CRY2</label>
    </interactant>
    <organismsDiffer>false</organismsDiffer>
    <experiments>3</experiments>
</comment>
<comment type="interaction">
    <interactant intactId="EBI-12805508">
        <id>Q3LI70</id>
    </interactant>
    <interactant intactId="EBI-12842046">
        <id>A8MUP2</id>
        <label>CSKMT</label>
    </interactant>
    <organismsDiffer>false</organismsDiffer>
    <experiments>3</experiments>
</comment>
<comment type="interaction">
    <interactant intactId="EBI-12805508">
        <id>Q3LI70</id>
    </interactant>
    <interactant intactId="EBI-3867333">
        <id>A8MQ03</id>
        <label>CYSRT1</label>
    </interactant>
    <organismsDiffer>false</organismsDiffer>
    <experiments>3</experiments>
</comment>
<comment type="interaction">
    <interactant intactId="EBI-12805508">
        <id>Q3LI70</id>
    </interactant>
    <interactant intactId="EBI-954466">
        <id>Q96MA1</id>
        <label>DMRTB1</label>
    </interactant>
    <organismsDiffer>false</organismsDiffer>
    <experiments>3</experiments>
</comment>
<comment type="interaction">
    <interactant intactId="EBI-12805508">
        <id>Q3LI70</id>
    </interactant>
    <interactant intactId="EBI-740376">
        <id>Q86UW9</id>
        <label>DTX2</label>
    </interactant>
    <organismsDiffer>false</organismsDiffer>
    <experiments>3</experiments>
</comment>
<comment type="interaction">
    <interactant intactId="EBI-12805508">
        <id>Q3LI70</id>
    </interactant>
    <interactant intactId="EBI-744099">
        <id>Q9H0I2</id>
        <label>ENKD1</label>
    </interactant>
    <organismsDiffer>false</organismsDiffer>
    <experiments>3</experiments>
</comment>
<comment type="interaction">
    <interactant intactId="EBI-12805508">
        <id>Q3LI70</id>
    </interactant>
    <interactant intactId="EBI-2339898">
        <id>Q9NW38</id>
        <label>FANCL</label>
    </interactant>
    <organismsDiffer>false</organismsDiffer>
    <experiments>3</experiments>
</comment>
<comment type="interaction">
    <interactant intactId="EBI-12805508">
        <id>Q3LI70</id>
    </interactant>
    <interactant intactId="EBI-744935">
        <id>Q9BVV2</id>
        <label>FNDC11</label>
    </interactant>
    <organismsDiffer>false</organismsDiffer>
    <experiments>3</experiments>
</comment>
<comment type="interaction">
    <interactant intactId="EBI-12805508">
        <id>Q3LI70</id>
    </interactant>
    <interactant intactId="EBI-1759806">
        <id>O75593</id>
        <label>FOXH1</label>
    </interactant>
    <organismsDiffer>false</organismsDiffer>
    <experiments>3</experiments>
</comment>
<comment type="interaction">
    <interactant intactId="EBI-12805508">
        <id>Q3LI70</id>
    </interactant>
    <interactant intactId="EBI-751540">
        <id>O95872</id>
        <label>GPANK1</label>
    </interactant>
    <organismsDiffer>false</organismsDiffer>
    <experiments>3</experiments>
</comment>
<comment type="interaction">
    <interactant intactId="EBI-12805508">
        <id>Q3LI70</id>
    </interactant>
    <interactant intactId="EBI-11978177">
        <id>Q96NT3-2</id>
        <label>GUCD1</label>
    </interactant>
    <organismsDiffer>false</organismsDiffer>
    <experiments>3</experiments>
</comment>
<comment type="interaction">
    <interactant intactId="EBI-12805508">
        <id>Q3LI70</id>
    </interactant>
    <interactant intactId="EBI-740785">
        <id>P49639</id>
        <label>HOXA1</label>
    </interactant>
    <organismsDiffer>false</organismsDiffer>
    <experiments>3</experiments>
</comment>
<comment type="interaction">
    <interactant intactId="EBI-12805508">
        <id>Q3LI70</id>
    </interactant>
    <interactant intactId="EBI-12056251">
        <id>Q9ULV5-2</id>
        <label>HSF4</label>
    </interactant>
    <organismsDiffer>false</organismsDiffer>
    <experiments>3</experiments>
</comment>
<comment type="interaction">
    <interactant intactId="EBI-12805508">
        <id>Q3LI70</id>
    </interactant>
    <interactant intactId="EBI-6509505">
        <id>Q0VD86</id>
        <label>INCA1</label>
    </interactant>
    <organismsDiffer>false</organismsDiffer>
    <experiments>3</experiments>
</comment>
<comment type="interaction">
    <interactant intactId="EBI-12805508">
        <id>Q3LI70</id>
    </interactant>
    <interactant intactId="EBI-14069005">
        <id>Q9BVG8-5</id>
        <label>KIFC3</label>
    </interactant>
    <organismsDiffer>false</organismsDiffer>
    <experiments>3</experiments>
</comment>
<comment type="interaction">
    <interactant intactId="EBI-12805508">
        <id>Q3LI70</id>
    </interactant>
    <interactant intactId="EBI-10981970">
        <id>Q5T749</id>
        <label>KPRP</label>
    </interactant>
    <organismsDiffer>false</organismsDiffer>
    <experiments>3</experiments>
</comment>
<comment type="interaction">
    <interactant intactId="EBI-12805508">
        <id>Q3LI70</id>
    </interactant>
    <interactant intactId="EBI-10176396">
        <id>P60329</id>
        <label>KRTAP12-4</label>
    </interactant>
    <organismsDiffer>false</organismsDiffer>
    <experiments>3</experiments>
</comment>
<comment type="interaction">
    <interactant intactId="EBI-12805508">
        <id>Q3LI70</id>
    </interactant>
    <interactant intactId="EBI-3957672">
        <id>Q6PEX3</id>
        <label>KRTAP26-1</label>
    </interactant>
    <organismsDiffer>false</organismsDiffer>
    <experiments>3</experiments>
</comment>
<comment type="interaction">
    <interactant intactId="EBI-12805508">
        <id>Q3LI70</id>
    </interactant>
    <interactant intactId="EBI-22311199">
        <id>Q3LI67</id>
        <label>KRTAP6-3</label>
    </interactant>
    <organismsDiffer>false</organismsDiffer>
    <experiments>3</experiments>
</comment>
<comment type="interaction">
    <interactant intactId="EBI-12805508">
        <id>Q3LI70</id>
    </interactant>
    <interactant intactId="EBI-1043191">
        <id>Q9BYQ3</id>
        <label>KRTAP9-3</label>
    </interactant>
    <organismsDiffer>false</organismsDiffer>
    <experiments>3</experiments>
</comment>
<comment type="interaction">
    <interactant intactId="EBI-12805508">
        <id>Q3LI70</id>
    </interactant>
    <interactant intactId="EBI-9088686">
        <id>Q14847-2</id>
        <label>LASP1</label>
    </interactant>
    <organismsDiffer>false</organismsDiffer>
    <experiments>3</experiments>
</comment>
<comment type="interaction">
    <interactant intactId="EBI-12805508">
        <id>Q3LI70</id>
    </interactant>
    <interactant intactId="EBI-2341787">
        <id>Q17RB8</id>
        <label>LONRF1</label>
    </interactant>
    <organismsDiffer>false</organismsDiffer>
    <experiments>3</experiments>
</comment>
<comment type="interaction">
    <interactant intactId="EBI-12805508">
        <id>Q3LI70</id>
    </interactant>
    <interactant intactId="EBI-8025850">
        <id>O14770-4</id>
        <label>MEIS2</label>
    </interactant>
    <organismsDiffer>false</organismsDiffer>
    <experiments>3</experiments>
</comment>
<comment type="interaction">
    <interactant intactId="EBI-12805508">
        <id>Q3LI70</id>
    </interactant>
    <interactant intactId="EBI-2340269">
        <id>Q13064</id>
        <label>MKRN3</label>
    </interactant>
    <organismsDiffer>false</organismsDiffer>
    <experiments>3</experiments>
</comment>
<comment type="interaction">
    <interactant intactId="EBI-12805508">
        <id>Q3LI70</id>
    </interactant>
    <interactant intactId="EBI-5662487">
        <id>Q8TDC0</id>
        <label>MYOZ3</label>
    </interactant>
    <organismsDiffer>false</organismsDiffer>
    <experiments>3</experiments>
</comment>
<comment type="interaction">
    <interactant intactId="EBI-12805508">
        <id>Q3LI70</id>
    </interactant>
    <interactant intactId="EBI-2858213">
        <id>Q86VE0</id>
        <label>MYPOP</label>
    </interactant>
    <organismsDiffer>false</organismsDiffer>
    <experiments>3</experiments>
</comment>
<comment type="interaction">
    <interactant intactId="EBI-12805508">
        <id>Q3LI70</id>
    </interactant>
    <interactant intactId="EBI-395927">
        <id>Q9BVI4</id>
        <label>NOC4L</label>
    </interactant>
    <organismsDiffer>false</organismsDiffer>
    <experiments>3</experiments>
</comment>
<comment type="interaction">
    <interactant intactId="EBI-12805508">
        <id>Q3LI70</id>
    </interactant>
    <interactant intactId="EBI-741158">
        <id>Q96HA8</id>
        <label>NTAQ1</label>
    </interactant>
    <organismsDiffer>false</organismsDiffer>
    <experiments>3</experiments>
</comment>
<comment type="interaction">
    <interactant intactId="EBI-12805508">
        <id>Q3LI70</id>
    </interactant>
    <interactant intactId="EBI-536879">
        <id>O43482</id>
        <label>OIP5</label>
    </interactant>
    <organismsDiffer>false</organismsDiffer>
    <experiments>3</experiments>
</comment>
<comment type="interaction">
    <interactant intactId="EBI-12805508">
        <id>Q3LI70</id>
    </interactant>
    <interactant intactId="EBI-11022007">
        <id>Q9HBE1-4</id>
        <label>PATZ1</label>
    </interactant>
    <organismsDiffer>false</organismsDiffer>
    <experiments>3</experiments>
</comment>
<comment type="interaction">
    <interactant intactId="EBI-12805508">
        <id>Q3LI70</id>
    </interactant>
    <interactant intactId="EBI-12014286">
        <id>Q494U1-3</id>
        <label>PLEKHN1</label>
    </interactant>
    <organismsDiffer>false</organismsDiffer>
    <experiments>3</experiments>
</comment>
<comment type="interaction">
    <interactant intactId="EBI-12805508">
        <id>Q3LI70</id>
    </interactant>
    <interactant intactId="EBI-750734">
        <id>Q9NRY6</id>
        <label>PLSCR3</label>
    </interactant>
    <organismsDiffer>false</organismsDiffer>
    <experiments>3</experiments>
</comment>
<comment type="interaction">
    <interactant intactId="EBI-12805508">
        <id>Q3LI70</id>
    </interactant>
    <interactant intactId="EBI-769257">
        <id>Q9NRQ2</id>
        <label>PLSCR4</label>
    </interactant>
    <organismsDiffer>false</organismsDiffer>
    <experiments>3</experiments>
</comment>
<comment type="interaction">
    <interactant intactId="EBI-12805508">
        <id>Q3LI70</id>
    </interactant>
    <interactant intactId="EBI-17236143">
        <id>Q12837</id>
        <label>POU4F2</label>
    </interactant>
    <organismsDiffer>false</organismsDiffer>
    <experiments>3</experiments>
</comment>
<comment type="interaction">
    <interactant intactId="EBI-12805508">
        <id>Q3LI70</id>
    </interactant>
    <interactant intactId="EBI-9027467">
        <id>O75360</id>
        <label>PROP1</label>
    </interactant>
    <organismsDiffer>false</organismsDiffer>
    <experiments>3</experiments>
</comment>
<comment type="interaction">
    <interactant intactId="EBI-12805508">
        <id>Q3LI70</id>
    </interactant>
    <interactant intactId="EBI-359335">
        <id>P49721</id>
        <label>PSMB2</label>
    </interactant>
    <organismsDiffer>false</organismsDiffer>
    <experiments>3</experiments>
</comment>
<comment type="interaction">
    <interactant intactId="EBI-12805508">
        <id>Q3LI70</id>
    </interactant>
    <interactant intactId="EBI-11987469">
        <id>Q6ZRY4</id>
        <label>RBPMS2</label>
    </interactant>
    <organismsDiffer>false</organismsDiffer>
    <experiments>3</experiments>
</comment>
<comment type="interaction">
    <interactant intactId="EBI-12805508">
        <id>Q3LI70</id>
    </interactant>
    <interactant intactId="EBI-372094">
        <id>Q9BQY4</id>
        <label>RHOXF2</label>
    </interactant>
    <organismsDiffer>false</organismsDiffer>
    <experiments>3</experiments>
</comment>
<comment type="interaction">
    <interactant intactId="EBI-12805508">
        <id>Q3LI70</id>
    </interactant>
    <interactant intactId="EBI-11984663">
        <id>Q06455-2</id>
        <label>RUNX1T1</label>
    </interactant>
    <organismsDiffer>false</organismsDiffer>
    <experiments>3</experiments>
</comment>
<comment type="interaction">
    <interactant intactId="EBI-12805508">
        <id>Q3LI70</id>
    </interactant>
    <interactant intactId="EBI-12000762">
        <id>Q7Z5V6-2</id>
        <label>SAXO4</label>
    </interactant>
    <organismsDiffer>false</organismsDiffer>
    <experiments>3</experiments>
</comment>
<comment type="interaction">
    <interactant intactId="EBI-12805508">
        <id>Q3LI70</id>
    </interactant>
    <interactant intactId="EBI-6269587">
        <id>Q9H1K4</id>
        <label>SLC25A18</label>
    </interactant>
    <organismsDiffer>false</organismsDiffer>
    <experiments>3</experiments>
</comment>
<comment type="interaction">
    <interactant intactId="EBI-12805508">
        <id>Q3LI70</id>
    </interactant>
    <interactant intactId="EBI-395421">
        <id>Q16637</id>
        <label>SMN2</label>
    </interactant>
    <organismsDiffer>false</organismsDiffer>
    <experiments>3</experiments>
</comment>
<comment type="interaction">
    <interactant intactId="EBI-12805508">
        <id>Q3LI70</id>
    </interactant>
    <interactant intactId="EBI-372475">
        <id>P14678-2</id>
        <label>SNRPB</label>
    </interactant>
    <organismsDiffer>false</organismsDiffer>
    <experiments>3</experiments>
</comment>
<comment type="interaction">
    <interactant intactId="EBI-12805508">
        <id>Q3LI70</id>
    </interactant>
    <interactant intactId="EBI-766589">
        <id>P09234</id>
        <label>SNRPC</label>
    </interactant>
    <organismsDiffer>false</organismsDiffer>
    <experiments>3</experiments>
</comment>
<comment type="interaction">
    <interactant intactId="EBI-12805508">
        <id>Q3LI70</id>
    </interactant>
    <interactant intactId="EBI-11959123">
        <id>Q99932-2</id>
        <label>SPAG8</label>
    </interactant>
    <organismsDiffer>false</organismsDiffer>
    <experiments>3</experiments>
</comment>
<comment type="interaction">
    <interactant intactId="EBI-12805508">
        <id>Q3LI70</id>
    </interactant>
    <interactant intactId="EBI-10269322">
        <id>Q8NCR6</id>
        <label>SPMIP6</label>
    </interactant>
    <organismsDiffer>false</organismsDiffer>
    <experiments>3</experiments>
</comment>
<comment type="interaction">
    <interactant intactId="EBI-12805508">
        <id>Q3LI70</id>
    </interactant>
    <interactant intactId="EBI-750487">
        <id>Q8WW24</id>
        <label>TEKT4</label>
    </interactant>
    <organismsDiffer>false</organismsDiffer>
    <experiments>3</experiments>
</comment>
<comment type="interaction">
    <interactant intactId="EBI-12805508">
        <id>Q3LI70</id>
    </interactant>
    <interactant intactId="EBI-10239812">
        <id>Q96M29</id>
        <label>TEKT5</label>
    </interactant>
    <organismsDiffer>false</organismsDiffer>
    <experiments>3</experiments>
</comment>
<comment type="interaction">
    <interactant intactId="EBI-12805508">
        <id>Q3LI70</id>
    </interactant>
    <interactant intactId="EBI-752030">
        <id>Q96A09</id>
        <label>TENT5B</label>
    </interactant>
    <organismsDiffer>false</organismsDiffer>
    <experiments>3</experiments>
</comment>
<comment type="interaction">
    <interactant intactId="EBI-12805508">
        <id>Q3LI70</id>
    </interactant>
    <interactant intactId="EBI-11952651">
        <id>Q7Z6R9</id>
        <label>TFAP2D</label>
    </interactant>
    <organismsDiffer>false</organismsDiffer>
    <experiments>3</experiments>
</comment>
<comment type="interaction">
    <interactant intactId="EBI-12805508">
        <id>Q3LI70</id>
    </interactant>
    <interactant intactId="EBI-12023322">
        <id>Q8N831</id>
        <label>TSPYL6</label>
    </interactant>
    <organismsDiffer>false</organismsDiffer>
    <experiments>3</experiments>
</comment>
<comment type="interaction">
    <interactant intactId="EBI-12805508">
        <id>Q3LI70</id>
    </interactant>
    <interactant intactId="EBI-10191303">
        <id>O95231</id>
        <label>VENTX</label>
    </interactant>
    <organismsDiffer>false</organismsDiffer>
    <experiments>3</experiments>
</comment>
<comment type="interaction">
    <interactant intactId="EBI-12805508">
        <id>Q3LI70</id>
    </interactant>
    <interactant intactId="EBI-11957216">
        <id>A8MV65-2</id>
        <label>VGLL3</label>
    </interactant>
    <organismsDiffer>false</organismsDiffer>
    <experiments>3</experiments>
</comment>
<comment type="interaction">
    <interactant intactId="EBI-12805508">
        <id>Q3LI70</id>
    </interactant>
    <interactant intactId="EBI-2559305">
        <id>A5D8V6</id>
        <label>VPS37C</label>
    </interactant>
    <organismsDiffer>false</organismsDiffer>
    <experiments>3</experiments>
</comment>
<comment type="interaction">
    <interactant intactId="EBI-12805508">
        <id>Q3LI70</id>
    </interactant>
    <interactant intactId="EBI-744257">
        <id>Q96IQ9</id>
        <label>ZNF414</label>
    </interactant>
    <organismsDiffer>false</organismsDiffer>
    <experiments>3</experiments>
</comment>
<comment type="interaction">
    <interactant intactId="EBI-12805508">
        <id>Q3LI70</id>
    </interactant>
    <interactant intactId="EBI-750454">
        <id>Q96EJ4</id>
    </interactant>
    <organismsDiffer>false</organismsDiffer>
    <experiments>3</experiments>
</comment>
<comment type="similarity">
    <text evidence="2">Belongs to the KRTAP type 19 family.</text>
</comment>
<comment type="sequence caution" evidence="2">
    <conflict type="frameshift">
        <sequence resource="EMBL-CDS" id="BAE46363"/>
    </conflict>
</comment>